<keyword id="KW-1005">Bacterial flagellum biogenesis</keyword>
<keyword id="KW-0143">Chaperone</keyword>
<keyword id="KW-0963">Cytoplasm</keyword>
<keyword id="KW-1185">Reference proteome</keyword>
<keyword id="KW-0810">Translation regulation</keyword>
<proteinExistence type="evidence at protein level"/>
<evidence type="ECO:0000255" key="1">
    <source>
        <dbReference type="HAMAP-Rule" id="MF_01185"/>
    </source>
</evidence>
<evidence type="ECO:0000269" key="2">
    <source>
    </source>
</evidence>
<evidence type="ECO:0000269" key="3">
    <source>
    </source>
</evidence>
<evidence type="ECO:0000269" key="4">
    <source>
    </source>
</evidence>
<evidence type="ECO:0000269" key="5">
    <source>
    </source>
</evidence>
<evidence type="ECO:0000269" key="6">
    <source>
    </source>
</evidence>
<evidence type="ECO:0000303" key="7">
    <source>
    </source>
</evidence>
<evidence type="ECO:0000305" key="8"/>
<name>FLIW_BACSU</name>
<sequence length="143" mass="16170">MIIHTKYHGQMNIKEEQIILFESGIPGFLEEKQFVILPLSEDSPFVALQSVTSENLAFIVVSPFIFFKNYEFDLDESTAELLDIDNIQDVEVMTILTMAEPFEKSTANLLAPIIVNRKNMMAKQVVLHDSSYTTKHPIGGESC</sequence>
<gene>
    <name evidence="1 7" type="primary">fliW</name>
    <name type="synonym">yviF</name>
    <name type="ordered locus">BSU35380</name>
</gene>
<protein>
    <recommendedName>
        <fullName evidence="1 7">Flagellar assembly factor FliW</fullName>
    </recommendedName>
</protein>
<feature type="chain" id="PRO_0000272970" description="Flagellar assembly factor FliW">
    <location>
        <begin position="1"/>
        <end position="143"/>
    </location>
</feature>
<dbReference type="EMBL" id="U56901">
    <property type="protein sequence ID" value="AAC44949.1"/>
    <property type="molecule type" value="Genomic_DNA"/>
</dbReference>
<dbReference type="EMBL" id="AL009126">
    <property type="protein sequence ID" value="CAB15555.1"/>
    <property type="molecule type" value="Genomic_DNA"/>
</dbReference>
<dbReference type="PIR" id="C70042">
    <property type="entry name" value="C70042"/>
</dbReference>
<dbReference type="RefSeq" id="NP_391418.1">
    <property type="nucleotide sequence ID" value="NC_000964.3"/>
</dbReference>
<dbReference type="RefSeq" id="WP_003228007.1">
    <property type="nucleotide sequence ID" value="NZ_OZ025638.1"/>
</dbReference>
<dbReference type="SMR" id="P96503"/>
<dbReference type="FunCoup" id="P96503">
    <property type="interactions" value="39"/>
</dbReference>
<dbReference type="STRING" id="224308.BSU35380"/>
<dbReference type="PaxDb" id="224308-BSU35380"/>
<dbReference type="EnsemblBacteria" id="CAB15555">
    <property type="protein sequence ID" value="CAB15555"/>
    <property type="gene ID" value="BSU_35380"/>
</dbReference>
<dbReference type="GeneID" id="936732"/>
<dbReference type="KEGG" id="bsu:BSU35380"/>
<dbReference type="PATRIC" id="fig|224308.179.peg.3829"/>
<dbReference type="eggNOG" id="COG1699">
    <property type="taxonomic scope" value="Bacteria"/>
</dbReference>
<dbReference type="InParanoid" id="P96503"/>
<dbReference type="OrthoDB" id="9801235at2"/>
<dbReference type="PhylomeDB" id="P96503"/>
<dbReference type="BioCyc" id="BSUB:BSU35380-MONOMER"/>
<dbReference type="Proteomes" id="UP000001570">
    <property type="component" value="Chromosome"/>
</dbReference>
<dbReference type="GO" id="GO:0005737">
    <property type="term" value="C:cytoplasm"/>
    <property type="evidence" value="ECO:0007669"/>
    <property type="project" value="UniProtKB-SubCell"/>
</dbReference>
<dbReference type="GO" id="GO:0044780">
    <property type="term" value="P:bacterial-type flagellum assembly"/>
    <property type="evidence" value="ECO:0007669"/>
    <property type="project" value="UniProtKB-UniRule"/>
</dbReference>
<dbReference type="GO" id="GO:0071978">
    <property type="term" value="P:bacterial-type flagellum-dependent swarming motility"/>
    <property type="evidence" value="ECO:0000315"/>
    <property type="project" value="CACAO"/>
</dbReference>
<dbReference type="GO" id="GO:1902210">
    <property type="term" value="P:positive regulation of bacterial-type flagellum assembly"/>
    <property type="evidence" value="ECO:0000315"/>
    <property type="project" value="CACAO"/>
</dbReference>
<dbReference type="GO" id="GO:0045727">
    <property type="term" value="P:positive regulation of translation"/>
    <property type="evidence" value="ECO:0000315"/>
    <property type="project" value="CACAO"/>
</dbReference>
<dbReference type="GO" id="GO:1902021">
    <property type="term" value="P:regulation of bacterial-type flagellum-dependent cell motility"/>
    <property type="evidence" value="ECO:0000315"/>
    <property type="project" value="CACAO"/>
</dbReference>
<dbReference type="Gene3D" id="2.30.290.10">
    <property type="entry name" value="BH3618-like"/>
    <property type="match status" value="1"/>
</dbReference>
<dbReference type="HAMAP" id="MF_01185">
    <property type="entry name" value="FliW"/>
    <property type="match status" value="1"/>
</dbReference>
<dbReference type="InterPro" id="IPR003775">
    <property type="entry name" value="Flagellar_assembly_factor_FliW"/>
</dbReference>
<dbReference type="InterPro" id="IPR024046">
    <property type="entry name" value="Flagellar_assmbl_FliW_dom_sf"/>
</dbReference>
<dbReference type="NCBIfam" id="NF009793">
    <property type="entry name" value="PRK13285.1-1"/>
    <property type="match status" value="1"/>
</dbReference>
<dbReference type="PANTHER" id="PTHR39190">
    <property type="entry name" value="FLAGELLAR ASSEMBLY FACTOR FLIW"/>
    <property type="match status" value="1"/>
</dbReference>
<dbReference type="PANTHER" id="PTHR39190:SF1">
    <property type="entry name" value="FLAGELLAR ASSEMBLY FACTOR FLIW"/>
    <property type="match status" value="1"/>
</dbReference>
<dbReference type="Pfam" id="PF02623">
    <property type="entry name" value="FliW"/>
    <property type="match status" value="1"/>
</dbReference>
<dbReference type="SUPFAM" id="SSF141457">
    <property type="entry name" value="BH3618-like"/>
    <property type="match status" value="1"/>
</dbReference>
<reference key="1">
    <citation type="journal article" date="1996" name="Microbiology">
        <title>Sequence of the 305 degrees-307 degrees region of the Bacillus subtilis chromosome.</title>
        <authorList>
            <person name="Soldo B."/>
            <person name="Lazarevic V."/>
            <person name="Mauel C."/>
            <person name="Karamata D."/>
        </authorList>
    </citation>
    <scope>NUCLEOTIDE SEQUENCE [GENOMIC DNA]</scope>
    <source>
        <strain>168</strain>
    </source>
</reference>
<reference key="2">
    <citation type="journal article" date="1997" name="Nature">
        <title>The complete genome sequence of the Gram-positive bacterium Bacillus subtilis.</title>
        <authorList>
            <person name="Kunst F."/>
            <person name="Ogasawara N."/>
            <person name="Moszer I."/>
            <person name="Albertini A.M."/>
            <person name="Alloni G."/>
            <person name="Azevedo V."/>
            <person name="Bertero M.G."/>
            <person name="Bessieres P."/>
            <person name="Bolotin A."/>
            <person name="Borchert S."/>
            <person name="Borriss R."/>
            <person name="Boursier L."/>
            <person name="Brans A."/>
            <person name="Braun M."/>
            <person name="Brignell S.C."/>
            <person name="Bron S."/>
            <person name="Brouillet S."/>
            <person name="Bruschi C.V."/>
            <person name="Caldwell B."/>
            <person name="Capuano V."/>
            <person name="Carter N.M."/>
            <person name="Choi S.-K."/>
            <person name="Codani J.-J."/>
            <person name="Connerton I.F."/>
            <person name="Cummings N.J."/>
            <person name="Daniel R.A."/>
            <person name="Denizot F."/>
            <person name="Devine K.M."/>
            <person name="Duesterhoeft A."/>
            <person name="Ehrlich S.D."/>
            <person name="Emmerson P.T."/>
            <person name="Entian K.-D."/>
            <person name="Errington J."/>
            <person name="Fabret C."/>
            <person name="Ferrari E."/>
            <person name="Foulger D."/>
            <person name="Fritz C."/>
            <person name="Fujita M."/>
            <person name="Fujita Y."/>
            <person name="Fuma S."/>
            <person name="Galizzi A."/>
            <person name="Galleron N."/>
            <person name="Ghim S.-Y."/>
            <person name="Glaser P."/>
            <person name="Goffeau A."/>
            <person name="Golightly E.J."/>
            <person name="Grandi G."/>
            <person name="Guiseppi G."/>
            <person name="Guy B.J."/>
            <person name="Haga K."/>
            <person name="Haiech J."/>
            <person name="Harwood C.R."/>
            <person name="Henaut A."/>
            <person name="Hilbert H."/>
            <person name="Holsappel S."/>
            <person name="Hosono S."/>
            <person name="Hullo M.-F."/>
            <person name="Itaya M."/>
            <person name="Jones L.-M."/>
            <person name="Joris B."/>
            <person name="Karamata D."/>
            <person name="Kasahara Y."/>
            <person name="Klaerr-Blanchard M."/>
            <person name="Klein C."/>
            <person name="Kobayashi Y."/>
            <person name="Koetter P."/>
            <person name="Koningstein G."/>
            <person name="Krogh S."/>
            <person name="Kumano M."/>
            <person name="Kurita K."/>
            <person name="Lapidus A."/>
            <person name="Lardinois S."/>
            <person name="Lauber J."/>
            <person name="Lazarevic V."/>
            <person name="Lee S.-M."/>
            <person name="Levine A."/>
            <person name="Liu H."/>
            <person name="Masuda S."/>
            <person name="Mauel C."/>
            <person name="Medigue C."/>
            <person name="Medina N."/>
            <person name="Mellado R.P."/>
            <person name="Mizuno M."/>
            <person name="Moestl D."/>
            <person name="Nakai S."/>
            <person name="Noback M."/>
            <person name="Noone D."/>
            <person name="O'Reilly M."/>
            <person name="Ogawa K."/>
            <person name="Ogiwara A."/>
            <person name="Oudega B."/>
            <person name="Park S.-H."/>
            <person name="Parro V."/>
            <person name="Pohl T.M."/>
            <person name="Portetelle D."/>
            <person name="Porwollik S."/>
            <person name="Prescott A.M."/>
            <person name="Presecan E."/>
            <person name="Pujic P."/>
            <person name="Purnelle B."/>
            <person name="Rapoport G."/>
            <person name="Rey M."/>
            <person name="Reynolds S."/>
            <person name="Rieger M."/>
            <person name="Rivolta C."/>
            <person name="Rocha E."/>
            <person name="Roche B."/>
            <person name="Rose M."/>
            <person name="Sadaie Y."/>
            <person name="Sato T."/>
            <person name="Scanlan E."/>
            <person name="Schleich S."/>
            <person name="Schroeter R."/>
            <person name="Scoffone F."/>
            <person name="Sekiguchi J."/>
            <person name="Sekowska A."/>
            <person name="Seror S.J."/>
            <person name="Serror P."/>
            <person name="Shin B.-S."/>
            <person name="Soldo B."/>
            <person name="Sorokin A."/>
            <person name="Tacconi E."/>
            <person name="Takagi T."/>
            <person name="Takahashi H."/>
            <person name="Takemaru K."/>
            <person name="Takeuchi M."/>
            <person name="Tamakoshi A."/>
            <person name="Tanaka T."/>
            <person name="Terpstra P."/>
            <person name="Tognoni A."/>
            <person name="Tosato V."/>
            <person name="Uchiyama S."/>
            <person name="Vandenbol M."/>
            <person name="Vannier F."/>
            <person name="Vassarotti A."/>
            <person name="Viari A."/>
            <person name="Wambutt R."/>
            <person name="Wedler E."/>
            <person name="Wedler H."/>
            <person name="Weitzenegger T."/>
            <person name="Winters P."/>
            <person name="Wipat A."/>
            <person name="Yamamoto H."/>
            <person name="Yamane K."/>
            <person name="Yasumoto K."/>
            <person name="Yata K."/>
            <person name="Yoshida K."/>
            <person name="Yoshikawa H.-F."/>
            <person name="Zumstein E."/>
            <person name="Yoshikawa H."/>
            <person name="Danchin A."/>
        </authorList>
    </citation>
    <scope>NUCLEOTIDE SEQUENCE [LARGE SCALE GENOMIC DNA]</scope>
    <source>
        <strain>168</strain>
    </source>
</reference>
<reference key="3">
    <citation type="journal article" date="2006" name="J. Bacteriol.">
        <title>Novel conserved assembly factor of the bacterial flagellum.</title>
        <authorList>
            <person name="Titz B."/>
            <person name="Rajagopala S.V."/>
            <person name="Ester C."/>
            <person name="Haeuser R."/>
            <person name="Uetz P."/>
        </authorList>
    </citation>
    <scope>FUNCTION IN FLAGELLAR ASSEMBLY</scope>
    <scope>INTERACTION WITH FLAGELLIN</scope>
    <scope>DISRUPTION PHENOTYPE</scope>
</reference>
<reference key="4">
    <citation type="journal article" date="2007" name="Mol. Microbiol.">
        <title>CsrA of Bacillus subtilis regulates translation initiation of the gene encoding the flagellin protein (hag) by blocking ribosome binding.</title>
        <authorList>
            <person name="Yakhnin H."/>
            <person name="Pandit P."/>
            <person name="Petty T.J."/>
            <person name="Baker C.S."/>
            <person name="Romeo T."/>
            <person name="Babitzke P."/>
        </authorList>
    </citation>
    <scope>INDUCTION</scope>
    <source>
        <strain>168</strain>
        <strain>1A96</strain>
    </source>
</reference>
<reference key="5">
    <citation type="journal article" date="2011" name="Mol. Microbiol.">
        <title>CsrA-FliW interaction governs flagellin homeostasis and a checkpoint on flagellar morphogenesis in Bacillus subtilis.</title>
        <authorList>
            <person name="Mukherjee S."/>
            <person name="Yakhnin H."/>
            <person name="Kysela D."/>
            <person name="Sokoloski J."/>
            <person name="Babitzke P."/>
            <person name="Kearns D.B."/>
        </authorList>
    </citation>
    <scope>FUNCTION</scope>
    <scope>INTERACTION WITH CSRA</scope>
    <scope>INTERACTION WITH FLAGELLIN</scope>
    <scope>DISRUPTION PHENOTYPE</scope>
    <source>
        <strain>3610</strain>
    </source>
</reference>
<reference key="6">
    <citation type="journal article" date="2013" name="J. Bacteriol.">
        <title>FliW and FliS function independently to control cytoplasmic flagellin levels in Bacillus subtilis.</title>
        <authorList>
            <person name="Mukherjee S."/>
            <person name="Babitzke P."/>
            <person name="Kearns D.B."/>
        </authorList>
    </citation>
    <scope>SUBUNIT</scope>
    <scope>INTERACTION WITH FLAGELLIN</scope>
    <scope>DISRUPTION PHENOTYPE</scope>
    <source>
        <strain>3610</strain>
    </source>
</reference>
<reference key="7">
    <citation type="journal article" date="2016" name="Proc. Natl. Acad. Sci. U.S.A.">
        <title>FliW antagonizes CsrA RNA binding by a noncompetitive allosteric mechanism.</title>
        <authorList>
            <person name="Mukherjee S."/>
            <person name="Oshiro R.T."/>
            <person name="Yakhnin H."/>
            <person name="Babitzke P."/>
            <person name="Kearns D.B."/>
        </authorList>
    </citation>
    <scope>FUNCTION</scope>
    <scope>INTERACTION WITH CSRA</scope>
    <source>
        <strain>3610</strain>
    </source>
</reference>
<comment type="function">
    <text evidence="2 4 6">Acts as an anti-CsrA protein, binds CsrA and prevents it from repressing translation of its target genes, one of which is flagellin. Binds to flagellin (hag), which is implicated in polymerization, and participates in the assembly of the flagellum (PubMed:16936039). An antagonist to translational regulator CsrA, it binds CsrA at an allosteric site and non-competitively inhibits CsrA binding to hag RNA (PubMed:27516547). Partner switching by flagellin between FliW and CsrA provides a flagellar assembly checkpoint to tightly control the timing of flagellin synthesis. Flagellin binds to assembly factor FliW, freeing translation regulator CsrA to repress translation of the flagellin mRNA. When the flagellar hook is assembled flagellin is secreted, depleting intracellular flagellin, which frees FliW to interact with CsrA and inhibits CsrA binding to mRNA. This derepresses flagellin translation and provides protein for flagellar assembly. Once the flagellar filament is completed cytoplasmic flagellin levels rise and CsrA translation repression of flagellin reinitiates (PubMed:21895793). Binds to CsrA and displaces it from hag mRNA (PubMed:21895793, PubMed:27516547). Binds to hag mRNA itself, but only at much higher concentrations than those required to displace CsrA (PubMed:21895793, PubMed:27516547).</text>
</comment>
<comment type="subunit">
    <text evidence="2 4 5 6">Interacts with flagellin in a 1:1 complex (PubMed:16936039, PubMed:21895793). Two molecules interact with each CsrA dimer; cannot interact with both flagellin and CsrA simultaneously (PubMed:21895793, PubMed:27516547). Has a higher affinity for CsrA than for flagellin (PubMed:21895793). Interacts directly with flagellin (hag), forms a 3-way complex of Hag, FliS and FliW in which Flis and FliW do not directly interact (PubMed:23144244). Interaction with Hag may occur via the C-terminus of Hag (PubMed:16936039).</text>
</comment>
<comment type="subcellular location">
    <subcellularLocation>
        <location evidence="1 8">Cytoplasm</location>
    </subcellularLocation>
</comment>
<comment type="induction">
    <text evidence="3">Part of the SigD-controlled yvyF-csrA operon and the SigA-controlled fliW-csrA operon (PubMed:17555441).</text>
</comment>
<comment type="disruption phenotype">
    <text evidence="2 4 5">Greatly reduced swarming motility, less flagellin (PubMed:16936039, PubMed:21895793). Fewer, shorter flagella assemble (PubMed:21895793). Loss of motility and flagellar assembly are suppressed by deletion of csrA (PubMed:21895793). Decreased expression of flagellin (Hag) which is suppressed by deletion of csrA (PubMed:23144244).</text>
</comment>
<comment type="similarity">
    <text evidence="1 8">Belongs to the FliW family.</text>
</comment>
<organism>
    <name type="scientific">Bacillus subtilis (strain 168)</name>
    <dbReference type="NCBI Taxonomy" id="224308"/>
    <lineage>
        <taxon>Bacteria</taxon>
        <taxon>Bacillati</taxon>
        <taxon>Bacillota</taxon>
        <taxon>Bacilli</taxon>
        <taxon>Bacillales</taxon>
        <taxon>Bacillaceae</taxon>
        <taxon>Bacillus</taxon>
    </lineage>
</organism>
<accession>P96503</accession>
<accession>Q795D3</accession>